<protein>
    <recommendedName>
        <fullName>Long neurotoxin 1</fullName>
    </recommendedName>
    <alternativeName>
        <fullName evidence="4">Toxin III</fullName>
    </alternativeName>
</protein>
<accession>P01389</accession>
<dbReference type="PIR" id="A01660">
    <property type="entry name" value="N2NJ1A"/>
</dbReference>
<dbReference type="SMR" id="P01389"/>
<dbReference type="TopDownProteomics" id="P01389"/>
<dbReference type="GO" id="GO:0005576">
    <property type="term" value="C:extracellular region"/>
    <property type="evidence" value="ECO:0007669"/>
    <property type="project" value="UniProtKB-SubCell"/>
</dbReference>
<dbReference type="GO" id="GO:0030550">
    <property type="term" value="F:acetylcholine receptor inhibitor activity"/>
    <property type="evidence" value="ECO:0007669"/>
    <property type="project" value="UniProtKB-KW"/>
</dbReference>
<dbReference type="GO" id="GO:0099106">
    <property type="term" value="F:ion channel regulator activity"/>
    <property type="evidence" value="ECO:0007669"/>
    <property type="project" value="UniProtKB-KW"/>
</dbReference>
<dbReference type="GO" id="GO:0090729">
    <property type="term" value="F:toxin activity"/>
    <property type="evidence" value="ECO:0007669"/>
    <property type="project" value="UniProtKB-KW"/>
</dbReference>
<dbReference type="CDD" id="cd00206">
    <property type="entry name" value="TFP_snake_toxin"/>
    <property type="match status" value="1"/>
</dbReference>
<dbReference type="Gene3D" id="2.10.60.10">
    <property type="entry name" value="CD59"/>
    <property type="match status" value="1"/>
</dbReference>
<dbReference type="InterPro" id="IPR003571">
    <property type="entry name" value="Snake_3FTx"/>
</dbReference>
<dbReference type="InterPro" id="IPR045860">
    <property type="entry name" value="Snake_toxin-like_sf"/>
</dbReference>
<dbReference type="InterPro" id="IPR018354">
    <property type="entry name" value="Snake_toxin_con_site"/>
</dbReference>
<dbReference type="InterPro" id="IPR054131">
    <property type="entry name" value="Toxin_cobra-type"/>
</dbReference>
<dbReference type="Pfam" id="PF21947">
    <property type="entry name" value="Toxin_cobra-type"/>
    <property type="match status" value="1"/>
</dbReference>
<dbReference type="SUPFAM" id="SSF57302">
    <property type="entry name" value="Snake toxin-like"/>
    <property type="match status" value="1"/>
</dbReference>
<dbReference type="PROSITE" id="PS00272">
    <property type="entry name" value="SNAKE_TOXIN"/>
    <property type="match status" value="1"/>
</dbReference>
<sequence>IRCFITPDVTSQACPDGQNICYTKTWCDNFCGMRGKRVDLGCAATCPTVKPGVDIKCCSTDNCNPFPTRERS</sequence>
<evidence type="ECO:0000250" key="1">
    <source>
        <dbReference type="UniProtKB" id="P25671"/>
    </source>
</evidence>
<evidence type="ECO:0000250" key="2">
    <source>
        <dbReference type="UniProtKB" id="P60615"/>
    </source>
</evidence>
<evidence type="ECO:0000269" key="3">
    <source>
    </source>
</evidence>
<evidence type="ECO:0000303" key="4">
    <source>
    </source>
</evidence>
<evidence type="ECO:0000305" key="5"/>
<evidence type="ECO:0000305" key="6">
    <source>
    </source>
</evidence>
<name>3L21_NAJAC</name>
<reference key="1">
    <citation type="journal article" date="1975" name="Eur. J. Biochem.">
        <title>Amino-acid sequence of toxin III of Naja haje.</title>
        <authorList>
            <person name="Kopeyan C."/>
            <person name="Miranda F."/>
            <person name="Rochat H."/>
        </authorList>
    </citation>
    <scope>PROTEIN SEQUENCE</scope>
    <scope>TOXIC DOSE</scope>
    <scope>SUBCELLULAR LOCATION</scope>
    <source>
        <tissue>Venom</tissue>
    </source>
</reference>
<reference key="2">
    <citation type="journal article" date="2013" name="Proc. Natl. Acad. Sci. U.S.A.">
        <title>The king cobra genome reveals dynamic gene evolution and adaptation in the snake venom system.</title>
        <authorList>
            <person name="Vonk F.J."/>
            <person name="Casewell N.R."/>
            <person name="Henkel C.V."/>
            <person name="Heimberg A.M."/>
            <person name="Jansen H.J."/>
            <person name="McCleary R.J."/>
            <person name="Kerkkamp H.M."/>
            <person name="Vos R.A."/>
            <person name="Guerreiro I."/>
            <person name="Calvete J.J."/>
            <person name="Wuster W."/>
            <person name="Woods A.E."/>
            <person name="Logan J.M."/>
            <person name="Harrison R.A."/>
            <person name="Castoe T.A."/>
            <person name="de Koning A.P."/>
            <person name="Pollock D.D."/>
            <person name="Yandell M."/>
            <person name="Calderon D."/>
            <person name="Renjifo C."/>
            <person name="Currier R.B."/>
            <person name="Salgado D."/>
            <person name="Pla D."/>
            <person name="Sanz L."/>
            <person name="Hyder A.S."/>
            <person name="Ribeiro J.M."/>
            <person name="Arntzen J.W."/>
            <person name="van den Thillart G.E."/>
            <person name="Boetzer M."/>
            <person name="Pirovano W."/>
            <person name="Dirks R.P."/>
            <person name="Spaink H.P."/>
            <person name="Duboule D."/>
            <person name="McGlinn E."/>
            <person name="Kini R.M."/>
            <person name="Richardson M.K."/>
        </authorList>
    </citation>
    <scope>IDENTIFICATION BY MASS SPECTROMETRY</scope>
    <source>
        <tissue>Venom</tissue>
    </source>
</reference>
<comment type="function">
    <text evidence="2">Binds with high affinity to muscular (alpha-1/CHRNA1) and neuronal (alpha-7/CHRNA7) nicotinic acetylcholine receptor (nAChR) and inhibits acetylcholine from binding to the receptor, thereby impairing neuromuscular and neuronal transmission.</text>
</comment>
<comment type="subcellular location">
    <subcellularLocation>
        <location evidence="3">Secreted</location>
    </subcellularLocation>
</comment>
<comment type="tissue specificity">
    <text evidence="6">Expressed by the venom gland.</text>
</comment>
<comment type="toxic dose">
    <text evidence="3">LD(50) is 0.067 mg/kg by subcutaneous injection.</text>
</comment>
<comment type="similarity">
    <text evidence="5">Belongs to the three-finger toxin family. Long-chain subfamily. Type II alpha-neurotoxin sub-subfamily.</text>
</comment>
<keyword id="KW-0008">Acetylcholine receptor inhibiting toxin</keyword>
<keyword id="KW-0903">Direct protein sequencing</keyword>
<keyword id="KW-1015">Disulfide bond</keyword>
<keyword id="KW-0872">Ion channel impairing toxin</keyword>
<keyword id="KW-0528">Neurotoxin</keyword>
<keyword id="KW-0629">Postsynaptic neurotoxin</keyword>
<keyword id="KW-0964">Secreted</keyword>
<keyword id="KW-0800">Toxin</keyword>
<proteinExistence type="evidence at protein level"/>
<organism>
    <name type="scientific">Naja anchietae</name>
    <name type="common">Anchieta's cobra</name>
    <name type="synonym">Naja haje anchietae</name>
    <dbReference type="NCBI Taxonomy" id="263737"/>
    <lineage>
        <taxon>Eukaryota</taxon>
        <taxon>Metazoa</taxon>
        <taxon>Chordata</taxon>
        <taxon>Craniata</taxon>
        <taxon>Vertebrata</taxon>
        <taxon>Euteleostomi</taxon>
        <taxon>Lepidosauria</taxon>
        <taxon>Squamata</taxon>
        <taxon>Bifurcata</taxon>
        <taxon>Unidentata</taxon>
        <taxon>Episquamata</taxon>
        <taxon>Toxicofera</taxon>
        <taxon>Serpentes</taxon>
        <taxon>Colubroidea</taxon>
        <taxon>Elapidae</taxon>
        <taxon>Elapinae</taxon>
        <taxon>Naja</taxon>
    </lineage>
</organism>
<feature type="chain" id="PRO_0000093543" description="Long neurotoxin 1" evidence="3">
    <location>
        <begin position="1"/>
        <end position="72"/>
    </location>
</feature>
<feature type="disulfide bond" evidence="1">
    <location>
        <begin position="3"/>
        <end position="21"/>
    </location>
</feature>
<feature type="disulfide bond" evidence="1">
    <location>
        <begin position="14"/>
        <end position="42"/>
    </location>
</feature>
<feature type="disulfide bond" evidence="1">
    <location>
        <begin position="27"/>
        <end position="31"/>
    </location>
</feature>
<feature type="disulfide bond" evidence="1">
    <location>
        <begin position="46"/>
        <end position="57"/>
    </location>
</feature>
<feature type="disulfide bond" evidence="1">
    <location>
        <begin position="58"/>
        <end position="63"/>
    </location>
</feature>